<sequence length="626" mass="71382">MIIFKKKAILKVLLLVPVFWICSLIFFAATSNDSSQIGSNNDLANKIAEANFHPKAAKQDVIQGFGPPIEPEPVVENNKVEEEEQPGGNLAKPKFMVDPNDPIYKKGDAAQAGELGKAVVVDKTKLSTEEKAKYDKGMLNNAFNQYASDMISVHRTLPTNIDAECKTEKYNENLPRTSVIICFHNEAWSVLLRTVHSVLERTPDHLLEEVVLVDDFSDMDHTKRPLEEYMSQFGGKVKILRMEKREGLIRARLRGAAVATGEVLTYLDSHCECMEGWMEPLLDRIKRDPTTVVCPVIDVIDDNTFEYHHSKAYFTSVGGFDWGLQFNWHSIPERDRKNRTRPIDPVRSPTMAGGLFSIDKKYFEKLGTYDPGFDIWGGENLELSFKIWMCGGTLEIVPCSHVGHVFRKRSPYKWRTGVNVLKRNSIRLAEVWLDDYKTYYYERINNQLGDFGDISSRKKLREDLGCKSFKWYLDNIYPELFVPGESVAKGEVRNSAVQPARCLDCMVGRHEKNRPVGTYQCHGQGGNQYWMLSKDGEIRRDESCVDYAGSDVMVFPCHGMKGNQEWRYNHDTGRLQHAVSQKCLGMTKDGAKLEMVACQYDDPYQHWKFKEYNEAKAIEHGAKPPS</sequence>
<protein>
    <recommendedName>
        <fullName>Polypeptide N-acetylgalactosaminyltransferase 5</fullName>
        <shortName>pp-GaNTase 5</shortName>
        <ecNumber>2.4.1.41</ecNumber>
    </recommendedName>
    <alternativeName>
        <fullName>Protein-UDP acetylgalactosaminyltransferase 5</fullName>
    </alternativeName>
    <alternativeName>
        <fullName>UDP-GalNAc:polypeptide N-acetylgalactosaminyltransferase 5</fullName>
    </alternativeName>
</protein>
<accession>Q95ZJ1</accession>
<accession>O61391</accession>
<accession>O61392</accession>
<accession>O61393</accession>
<accession>Q95ZJ2</accession>
<accession>Q9U2J8</accession>
<gene>
    <name type="primary">gly-5</name>
    <name type="ORF">Y39E4B.12</name>
</gene>
<comment type="function">
    <text>Catalyzes the initial reaction in O-linked oligosaccharide biosynthesis, the transfer of an N-acetyl-D-galactosamine residue to a serine or threonine residue on the protein receptor.</text>
</comment>
<comment type="catalytic activity">
    <reaction>
        <text>L-seryl-[protein] + UDP-N-acetyl-alpha-D-galactosamine = a 3-O-[N-acetyl-alpha-D-galactosaminyl]-L-seryl-[protein] + UDP + H(+)</text>
        <dbReference type="Rhea" id="RHEA:23956"/>
        <dbReference type="Rhea" id="RHEA-COMP:9863"/>
        <dbReference type="Rhea" id="RHEA-COMP:12788"/>
        <dbReference type="ChEBI" id="CHEBI:15378"/>
        <dbReference type="ChEBI" id="CHEBI:29999"/>
        <dbReference type="ChEBI" id="CHEBI:53604"/>
        <dbReference type="ChEBI" id="CHEBI:58223"/>
        <dbReference type="ChEBI" id="CHEBI:67138"/>
        <dbReference type="EC" id="2.4.1.41"/>
    </reaction>
</comment>
<comment type="catalytic activity">
    <reaction>
        <text>L-threonyl-[protein] + UDP-N-acetyl-alpha-D-galactosamine = a 3-O-[N-acetyl-alpha-D-galactosaminyl]-L-threonyl-[protein] + UDP + H(+)</text>
        <dbReference type="Rhea" id="RHEA:52424"/>
        <dbReference type="Rhea" id="RHEA-COMP:11060"/>
        <dbReference type="Rhea" id="RHEA-COMP:11689"/>
        <dbReference type="ChEBI" id="CHEBI:15378"/>
        <dbReference type="ChEBI" id="CHEBI:30013"/>
        <dbReference type="ChEBI" id="CHEBI:58223"/>
        <dbReference type="ChEBI" id="CHEBI:67138"/>
        <dbReference type="ChEBI" id="CHEBI:87075"/>
        <dbReference type="EC" id="2.4.1.41"/>
    </reaction>
</comment>
<comment type="cofactor">
    <cofactor evidence="1">
        <name>Mn(2+)</name>
        <dbReference type="ChEBI" id="CHEBI:29035"/>
    </cofactor>
</comment>
<comment type="pathway">
    <text>Protein modification; protein glycosylation.</text>
</comment>
<comment type="subcellular location">
    <subcellularLocation>
        <location evidence="1">Golgi apparatus membrane</location>
        <topology evidence="1">Single-pass type II membrane protein</topology>
    </subcellularLocation>
</comment>
<comment type="alternative products">
    <event type="alternative splicing"/>
    <isoform>
        <id>Q95ZJ1-1</id>
        <name>a</name>
        <name>GLY5b</name>
        <name>GLY-5b</name>
        <sequence type="displayed"/>
    </isoform>
    <isoform>
        <id>Q95ZJ1-2</id>
        <name>b</name>
        <name>GLY5a</name>
        <name>GLY-5a</name>
        <sequence type="described" ref="VSP_011238"/>
    </isoform>
    <isoform>
        <id>Q95ZJ1-3</id>
        <name>c</name>
        <name>GLY5c</name>
        <name>GLY-5c</name>
        <sequence type="described" ref="VSP_011239"/>
    </isoform>
</comment>
<comment type="domain">
    <text evidence="1">There are two conserved domains in the glycosyltransferase region: the N-terminal domain (domain A, also called GT1 motif), which is probably involved in manganese coordination and substrate binding and the C-terminal domain (domain B, also called Gal/GalNAc-T motif), which is probably involved in catalytic reaction and UDP-Gal binding.</text>
</comment>
<comment type="domain">
    <text evidence="1">The ricin B-type lectin domain binds to GalNAc and contributes to the glycopeptide specificity.</text>
</comment>
<comment type="similarity">
    <text evidence="5">Belongs to the glycosyltransferase 2 family. GalNAc-T subfamily.</text>
</comment>
<name>GALT5_CAEEL</name>
<feature type="chain" id="PRO_0000059148" description="Polypeptide N-acetylgalactosaminyltransferase 5">
    <location>
        <begin position="1"/>
        <end position="626"/>
    </location>
</feature>
<feature type="topological domain" description="Cytoplasmic" evidence="2">
    <location>
        <begin position="1"/>
        <end position="11"/>
    </location>
</feature>
<feature type="transmembrane region" description="Helical; Signal-anchor for type II membrane protein" evidence="2">
    <location>
        <begin position="12"/>
        <end position="31"/>
    </location>
</feature>
<feature type="topological domain" description="Lumenal" evidence="2">
    <location>
        <begin position="32"/>
        <end position="626"/>
    </location>
</feature>
<feature type="domain" description="Ricin B-type lectin" evidence="3">
    <location>
        <begin position="488"/>
        <end position="610"/>
    </location>
</feature>
<feature type="region of interest" description="Catalytic subdomain A">
    <location>
        <begin position="174"/>
        <end position="284"/>
    </location>
</feature>
<feature type="region of interest" description="Catalytic subdomain B">
    <location>
        <begin position="345"/>
        <end position="407"/>
    </location>
</feature>
<feature type="binding site" evidence="1">
    <location>
        <position position="215"/>
    </location>
    <ligand>
        <name>substrate</name>
    </ligand>
</feature>
<feature type="binding site" evidence="1">
    <location>
        <position position="245"/>
    </location>
    <ligand>
        <name>substrate</name>
    </ligand>
</feature>
<feature type="binding site" evidence="1">
    <location>
        <position position="268"/>
    </location>
    <ligand>
        <name>Mn(2+)</name>
        <dbReference type="ChEBI" id="CHEBI:29035"/>
    </ligand>
</feature>
<feature type="binding site" evidence="1">
    <location>
        <position position="269"/>
    </location>
    <ligand>
        <name>substrate</name>
    </ligand>
</feature>
<feature type="binding site" evidence="1">
    <location>
        <position position="270"/>
    </location>
    <ligand>
        <name>Mn(2+)</name>
        <dbReference type="ChEBI" id="CHEBI:29035"/>
    </ligand>
</feature>
<feature type="binding site" evidence="1">
    <location>
        <position position="376"/>
    </location>
    <ligand>
        <name>substrate</name>
    </ligand>
</feature>
<feature type="binding site" evidence="1">
    <location>
        <position position="404"/>
    </location>
    <ligand>
        <name>Mn(2+)</name>
        <dbReference type="ChEBI" id="CHEBI:29035"/>
    </ligand>
</feature>
<feature type="binding site" evidence="1">
    <location>
        <position position="407"/>
    </location>
    <ligand>
        <name>substrate</name>
    </ligand>
</feature>
<feature type="binding site" evidence="1">
    <location>
        <position position="412"/>
    </location>
    <ligand>
        <name>substrate</name>
    </ligand>
</feature>
<feature type="glycosylation site" description="N-linked (GlcNAc...) asparagine" evidence="2">
    <location>
        <position position="32"/>
    </location>
</feature>
<feature type="glycosylation site" description="N-linked (GlcNAc...) asparagine" evidence="2">
    <location>
        <position position="338"/>
    </location>
</feature>
<feature type="disulfide bond" evidence="3">
    <location>
        <begin position="165"/>
        <end position="399"/>
    </location>
</feature>
<feature type="disulfide bond" evidence="3">
    <location>
        <begin position="390"/>
        <end position="466"/>
    </location>
</feature>
<feature type="disulfide bond" evidence="3">
    <location>
        <begin position="502"/>
        <end position="521"/>
    </location>
</feature>
<feature type="disulfide bond" evidence="3">
    <location>
        <begin position="544"/>
        <end position="557"/>
    </location>
</feature>
<feature type="disulfide bond" evidence="3">
    <location>
        <begin position="583"/>
        <end position="598"/>
    </location>
</feature>
<feature type="splice variant" id="VSP_011238" description="In isoform b." evidence="4">
    <original>VRNSAVQPARCLDCMVGRHEKNRPVGTYQCHG</original>
    <variation>MRNAGGKNRQCIDYKPSGGKTVGMYQCHN</variation>
    <location>
        <begin position="492"/>
        <end position="523"/>
    </location>
</feature>
<feature type="splice variant" id="VSP_011239" description="In isoform c." evidence="4">
    <original>VRNSAVQPARCLDCMVGRHEKNRPVGTYQCHG</original>
    <variation>LRNAQTSQCLDSAVGEEVENKAITPYPCHE</variation>
    <location>
        <begin position="492"/>
        <end position="523"/>
    </location>
</feature>
<feature type="sequence conflict" description="In Ref. 1; AAC13671/AAC13672/AAC13673." evidence="5" ref="1">
    <original>K</original>
    <variation>E</variation>
    <location>
        <position position="361"/>
    </location>
</feature>
<keyword id="KW-0025">Alternative splicing</keyword>
<keyword id="KW-1015">Disulfide bond</keyword>
<keyword id="KW-0325">Glycoprotein</keyword>
<keyword id="KW-0328">Glycosyltransferase</keyword>
<keyword id="KW-0333">Golgi apparatus</keyword>
<keyword id="KW-0430">Lectin</keyword>
<keyword id="KW-0464">Manganese</keyword>
<keyword id="KW-0472">Membrane</keyword>
<keyword id="KW-0479">Metal-binding</keyword>
<keyword id="KW-1185">Reference proteome</keyword>
<keyword id="KW-0735">Signal-anchor</keyword>
<keyword id="KW-0808">Transferase</keyword>
<keyword id="KW-0812">Transmembrane</keyword>
<keyword id="KW-1133">Transmembrane helix</keyword>
<dbReference type="EC" id="2.4.1.41"/>
<dbReference type="EMBL" id="AF031835">
    <property type="protein sequence ID" value="AAC13671.1"/>
    <property type="molecule type" value="mRNA"/>
</dbReference>
<dbReference type="EMBL" id="AF031836">
    <property type="protein sequence ID" value="AAC13672.1"/>
    <property type="molecule type" value="mRNA"/>
</dbReference>
<dbReference type="EMBL" id="AF031837">
    <property type="protein sequence ID" value="AAC13673.1"/>
    <property type="molecule type" value="mRNA"/>
</dbReference>
<dbReference type="EMBL" id="AL110487">
    <property type="protein sequence ID" value="CAB54435.1"/>
    <property type="molecule type" value="Genomic_DNA"/>
</dbReference>
<dbReference type="EMBL" id="AL110487">
    <property type="protein sequence ID" value="CAC42369.1"/>
    <property type="molecule type" value="Genomic_DNA"/>
</dbReference>
<dbReference type="EMBL" id="AL110487">
    <property type="protein sequence ID" value="CAC42368.1"/>
    <property type="molecule type" value="Genomic_DNA"/>
</dbReference>
<dbReference type="PIR" id="T42245">
    <property type="entry name" value="T42245"/>
</dbReference>
<dbReference type="PIR" id="T42246">
    <property type="entry name" value="T42246"/>
</dbReference>
<dbReference type="PIR" id="T42247">
    <property type="entry name" value="T42247"/>
</dbReference>
<dbReference type="RefSeq" id="NP_001022850.1">
    <property type="nucleotide sequence ID" value="NM_001027679.4"/>
</dbReference>
<dbReference type="RefSeq" id="NP_001022851.1">
    <property type="nucleotide sequence ID" value="NM_001027680.4"/>
</dbReference>
<dbReference type="RefSeq" id="NP_001022852.1">
    <molecule id="Q95ZJ1-3"/>
    <property type="nucleotide sequence ID" value="NM_001027681.9"/>
</dbReference>
<dbReference type="RefSeq" id="NP_001370120.1">
    <molecule id="Q95ZJ1-2"/>
    <property type="nucleotide sequence ID" value="NM_001383020.1"/>
</dbReference>
<dbReference type="RefSeq" id="NP_001379253.1">
    <molecule id="Q95ZJ1-1"/>
    <property type="nucleotide sequence ID" value="NM_001392225.1"/>
</dbReference>
<dbReference type="SMR" id="Q95ZJ1"/>
<dbReference type="BioGRID" id="41908">
    <property type="interactions" value="18"/>
</dbReference>
<dbReference type="DIP" id="DIP-26207N"/>
<dbReference type="FunCoup" id="Q95ZJ1">
    <property type="interactions" value="1221"/>
</dbReference>
<dbReference type="IntAct" id="Q95ZJ1">
    <property type="interactions" value="3"/>
</dbReference>
<dbReference type="STRING" id="6239.Y39E4B.12a.1"/>
<dbReference type="CAZy" id="CBM13">
    <property type="family name" value="Carbohydrate-Binding Module Family 13"/>
</dbReference>
<dbReference type="CAZy" id="GT27">
    <property type="family name" value="Glycosyltransferase Family 27"/>
</dbReference>
<dbReference type="GlyCosmos" id="Q95ZJ1">
    <property type="glycosylation" value="2 sites, No reported glycans"/>
</dbReference>
<dbReference type="PaxDb" id="6239-Y39E4B.12a.1"/>
<dbReference type="PeptideAtlas" id="Q95ZJ1"/>
<dbReference type="EnsemblMetazoa" id="Y39E4B.12a.1">
    <molecule id="Q95ZJ1-1"/>
    <property type="protein sequence ID" value="Y39E4B.12a.1"/>
    <property type="gene ID" value="WBGene00001630"/>
</dbReference>
<dbReference type="EnsemblMetazoa" id="Y39E4B.12a.2">
    <molecule id="Q95ZJ1-1"/>
    <property type="protein sequence ID" value="Y39E4B.12a.2"/>
    <property type="gene ID" value="WBGene00001630"/>
</dbReference>
<dbReference type="EnsemblMetazoa" id="Y39E4B.12b.1">
    <molecule id="Q95ZJ1-2"/>
    <property type="protein sequence ID" value="Y39E4B.12b.1"/>
    <property type="gene ID" value="WBGene00001630"/>
</dbReference>
<dbReference type="EnsemblMetazoa" id="Y39E4B.12b.2">
    <molecule id="Q95ZJ1-2"/>
    <property type="protein sequence ID" value="Y39E4B.12b.2"/>
    <property type="gene ID" value="WBGene00001630"/>
</dbReference>
<dbReference type="EnsemblMetazoa" id="Y39E4B.12c.1">
    <molecule id="Q95ZJ1-3"/>
    <property type="protein sequence ID" value="Y39E4B.12c.1"/>
    <property type="gene ID" value="WBGene00001630"/>
</dbReference>
<dbReference type="EnsemblMetazoa" id="Y39E4B.12c.2">
    <molecule id="Q95ZJ1-3"/>
    <property type="protein sequence ID" value="Y39E4B.12c.2"/>
    <property type="gene ID" value="WBGene00001630"/>
</dbReference>
<dbReference type="GeneID" id="176736"/>
<dbReference type="KEGG" id="cel:CELE_Y39E4B.12"/>
<dbReference type="UCSC" id="Y39E4B.12c">
    <molecule id="Q95ZJ1-1"/>
    <property type="organism name" value="c. elegans"/>
</dbReference>
<dbReference type="AGR" id="WB:WBGene00001630"/>
<dbReference type="CTD" id="176736"/>
<dbReference type="WormBase" id="Y39E4B.12a">
    <molecule id="Q95ZJ1-1"/>
    <property type="protein sequence ID" value="CE24240"/>
    <property type="gene ID" value="WBGene00001630"/>
    <property type="gene designation" value="gly-5"/>
</dbReference>
<dbReference type="WormBase" id="Y39E4B.12b">
    <molecule id="Q95ZJ1-2"/>
    <property type="protein sequence ID" value="CE28119"/>
    <property type="gene ID" value="WBGene00001630"/>
    <property type="gene designation" value="gly-5"/>
</dbReference>
<dbReference type="WormBase" id="Y39E4B.12c">
    <molecule id="Q95ZJ1-3"/>
    <property type="protein sequence ID" value="CE28120"/>
    <property type="gene ID" value="WBGene00001630"/>
    <property type="gene designation" value="gly-5"/>
</dbReference>
<dbReference type="eggNOG" id="KOG3736">
    <property type="taxonomic scope" value="Eukaryota"/>
</dbReference>
<dbReference type="GeneTree" id="ENSGT00940000170662"/>
<dbReference type="InParanoid" id="Q95ZJ1"/>
<dbReference type="OMA" id="DWNNFEF"/>
<dbReference type="OrthoDB" id="6119243at2759"/>
<dbReference type="PhylomeDB" id="Q95ZJ1"/>
<dbReference type="UniPathway" id="UPA00378"/>
<dbReference type="PRO" id="PR:Q95ZJ1"/>
<dbReference type="Proteomes" id="UP000001940">
    <property type="component" value="Chromosome III"/>
</dbReference>
<dbReference type="Bgee" id="WBGene00001630">
    <property type="expression patterns" value="Expressed in pharyngeal muscle cell (C elegans) and 4 other cell types or tissues"/>
</dbReference>
<dbReference type="GO" id="GO:0005794">
    <property type="term" value="C:Golgi apparatus"/>
    <property type="evidence" value="ECO:0000318"/>
    <property type="project" value="GO_Central"/>
</dbReference>
<dbReference type="GO" id="GO:0000139">
    <property type="term" value="C:Golgi membrane"/>
    <property type="evidence" value="ECO:0007669"/>
    <property type="project" value="UniProtKB-SubCell"/>
</dbReference>
<dbReference type="GO" id="GO:0030246">
    <property type="term" value="F:carbohydrate binding"/>
    <property type="evidence" value="ECO:0007669"/>
    <property type="project" value="UniProtKB-KW"/>
</dbReference>
<dbReference type="GO" id="GO:0046872">
    <property type="term" value="F:metal ion binding"/>
    <property type="evidence" value="ECO:0007669"/>
    <property type="project" value="UniProtKB-KW"/>
</dbReference>
<dbReference type="GO" id="GO:0004653">
    <property type="term" value="F:polypeptide N-acetylgalactosaminyltransferase activity"/>
    <property type="evidence" value="ECO:0000314"/>
    <property type="project" value="WormBase"/>
</dbReference>
<dbReference type="GO" id="GO:0036498">
    <property type="term" value="P:IRE1-mediated unfolded protein response"/>
    <property type="evidence" value="ECO:0007007"/>
    <property type="project" value="WormBase"/>
</dbReference>
<dbReference type="GO" id="GO:0006493">
    <property type="term" value="P:protein O-linked glycosylation"/>
    <property type="evidence" value="ECO:0000318"/>
    <property type="project" value="GO_Central"/>
</dbReference>
<dbReference type="GO" id="GO:0018243">
    <property type="term" value="P:protein O-linked glycosylation via threonine"/>
    <property type="evidence" value="ECO:0000314"/>
    <property type="project" value="WormBase"/>
</dbReference>
<dbReference type="CDD" id="cd23462">
    <property type="entry name" value="beta-trefoil_Ricin_Pgant9-like"/>
    <property type="match status" value="1"/>
</dbReference>
<dbReference type="CDD" id="cd02510">
    <property type="entry name" value="pp-GalNAc-T"/>
    <property type="match status" value="1"/>
</dbReference>
<dbReference type="FunFam" id="2.80.10.50:FF:000096">
    <property type="entry name" value="Polypeptide N-acetylgalactosaminyltransferase"/>
    <property type="match status" value="1"/>
</dbReference>
<dbReference type="FunFam" id="3.90.550.10:FF:000053">
    <property type="entry name" value="Polypeptide N-acetylgalactosaminyltransferase"/>
    <property type="match status" value="1"/>
</dbReference>
<dbReference type="Gene3D" id="2.80.10.50">
    <property type="match status" value="1"/>
</dbReference>
<dbReference type="Gene3D" id="3.90.550.10">
    <property type="entry name" value="Spore Coat Polysaccharide Biosynthesis Protein SpsA, Chain A"/>
    <property type="match status" value="1"/>
</dbReference>
<dbReference type="InterPro" id="IPR045885">
    <property type="entry name" value="GalNAc-T"/>
</dbReference>
<dbReference type="InterPro" id="IPR001173">
    <property type="entry name" value="Glyco_trans_2-like"/>
</dbReference>
<dbReference type="InterPro" id="IPR029044">
    <property type="entry name" value="Nucleotide-diphossugar_trans"/>
</dbReference>
<dbReference type="InterPro" id="IPR035992">
    <property type="entry name" value="Ricin_B-like_lectins"/>
</dbReference>
<dbReference type="InterPro" id="IPR000772">
    <property type="entry name" value="Ricin_B_lectin"/>
</dbReference>
<dbReference type="PANTHER" id="PTHR11675">
    <property type="entry name" value="N-ACETYLGALACTOSAMINYLTRANSFERASE"/>
    <property type="match status" value="1"/>
</dbReference>
<dbReference type="PANTHER" id="PTHR11675:SF131">
    <property type="entry name" value="POLYPEPTIDE N-ACETYLGALACTOSAMINYLTRANSFERASE 9-RELATED"/>
    <property type="match status" value="1"/>
</dbReference>
<dbReference type="Pfam" id="PF00535">
    <property type="entry name" value="Glycos_transf_2"/>
    <property type="match status" value="1"/>
</dbReference>
<dbReference type="Pfam" id="PF00652">
    <property type="entry name" value="Ricin_B_lectin"/>
    <property type="match status" value="1"/>
</dbReference>
<dbReference type="SMART" id="SM00458">
    <property type="entry name" value="RICIN"/>
    <property type="match status" value="1"/>
</dbReference>
<dbReference type="SUPFAM" id="SSF53448">
    <property type="entry name" value="Nucleotide-diphospho-sugar transferases"/>
    <property type="match status" value="1"/>
</dbReference>
<dbReference type="SUPFAM" id="SSF50370">
    <property type="entry name" value="Ricin B-like lectins"/>
    <property type="match status" value="1"/>
</dbReference>
<dbReference type="PROSITE" id="PS50231">
    <property type="entry name" value="RICIN_B_LECTIN"/>
    <property type="match status" value="1"/>
</dbReference>
<reference key="1">
    <citation type="journal article" date="1998" name="J. Biol. Chem.">
        <title>cDNA cloning and expression of a family of UDP-N-acetyl-D-galactosamine:polypeptide N-acetylgalactosaminyltransferase sequence homologs from Caenorhabditis elegans.</title>
        <authorList>
            <person name="Hagen F.K."/>
            <person name="Nehrke K."/>
        </authorList>
    </citation>
    <scope>NUCLEOTIDE SEQUENCE [MRNA] (ISOFORMS A; B AND C)</scope>
    <source>
        <strain>Bristol N2</strain>
    </source>
</reference>
<reference key="2">
    <citation type="journal article" date="1998" name="Science">
        <title>Genome sequence of the nematode C. elegans: a platform for investigating biology.</title>
        <authorList>
            <consortium name="The C. elegans sequencing consortium"/>
        </authorList>
    </citation>
    <scope>NUCLEOTIDE SEQUENCE [LARGE SCALE GENOMIC DNA]</scope>
    <source>
        <strain>Bristol N2</strain>
    </source>
</reference>
<organism>
    <name type="scientific">Caenorhabditis elegans</name>
    <dbReference type="NCBI Taxonomy" id="6239"/>
    <lineage>
        <taxon>Eukaryota</taxon>
        <taxon>Metazoa</taxon>
        <taxon>Ecdysozoa</taxon>
        <taxon>Nematoda</taxon>
        <taxon>Chromadorea</taxon>
        <taxon>Rhabditida</taxon>
        <taxon>Rhabditina</taxon>
        <taxon>Rhabditomorpha</taxon>
        <taxon>Rhabditoidea</taxon>
        <taxon>Rhabditidae</taxon>
        <taxon>Peloderinae</taxon>
        <taxon>Caenorhabditis</taxon>
    </lineage>
</organism>
<evidence type="ECO:0000250" key="1"/>
<evidence type="ECO:0000255" key="2"/>
<evidence type="ECO:0000255" key="3">
    <source>
        <dbReference type="PROSITE-ProRule" id="PRU00174"/>
    </source>
</evidence>
<evidence type="ECO:0000303" key="4">
    <source>
    </source>
</evidence>
<evidence type="ECO:0000305" key="5"/>
<proteinExistence type="evidence at transcript level"/>